<name>Y2274_HALSA</name>
<dbReference type="EMBL" id="AE004437">
    <property type="protein sequence ID" value="AAG20390.1"/>
    <property type="molecule type" value="Genomic_DNA"/>
</dbReference>
<dbReference type="PIR" id="B84378">
    <property type="entry name" value="B84378"/>
</dbReference>
<dbReference type="RefSeq" id="WP_010903691.1">
    <property type="nucleotide sequence ID" value="NC_002607.1"/>
</dbReference>
<dbReference type="SMR" id="Q9HN31"/>
<dbReference type="STRING" id="64091.VNG_2274C"/>
<dbReference type="PaxDb" id="64091-VNG_2274C"/>
<dbReference type="KEGG" id="hal:VNG_2274C"/>
<dbReference type="PATRIC" id="fig|64091.14.peg.1753"/>
<dbReference type="HOGENOM" id="CLU_135650_0_3_2"/>
<dbReference type="InParanoid" id="Q9HN31"/>
<dbReference type="OrthoDB" id="297764at2157"/>
<dbReference type="PhylomeDB" id="Q9HN31"/>
<dbReference type="Proteomes" id="UP000000554">
    <property type="component" value="Chromosome"/>
</dbReference>
<dbReference type="CDD" id="cd10456">
    <property type="entry name" value="GIY-YIG_UPF0213"/>
    <property type="match status" value="1"/>
</dbReference>
<dbReference type="Gene3D" id="3.40.1440.10">
    <property type="entry name" value="GIY-YIG endonuclease"/>
    <property type="match status" value="1"/>
</dbReference>
<dbReference type="InterPro" id="IPR000305">
    <property type="entry name" value="GIY-YIG_endonuc"/>
</dbReference>
<dbReference type="InterPro" id="IPR035901">
    <property type="entry name" value="GIY-YIG_endonuc_sf"/>
</dbReference>
<dbReference type="InterPro" id="IPR050190">
    <property type="entry name" value="UPF0213_domain"/>
</dbReference>
<dbReference type="PANTHER" id="PTHR34477">
    <property type="entry name" value="UPF0213 PROTEIN YHBQ"/>
    <property type="match status" value="1"/>
</dbReference>
<dbReference type="PANTHER" id="PTHR34477:SF1">
    <property type="entry name" value="UPF0213 PROTEIN YHBQ"/>
    <property type="match status" value="1"/>
</dbReference>
<dbReference type="Pfam" id="PF01541">
    <property type="entry name" value="GIY-YIG"/>
    <property type="match status" value="1"/>
</dbReference>
<dbReference type="SUPFAM" id="SSF82771">
    <property type="entry name" value="GIY-YIG endonuclease"/>
    <property type="match status" value="1"/>
</dbReference>
<dbReference type="PROSITE" id="PS50164">
    <property type="entry name" value="GIY_YIG"/>
    <property type="match status" value="1"/>
</dbReference>
<reference key="1">
    <citation type="journal article" date="2000" name="Proc. Natl. Acad. Sci. U.S.A.">
        <title>Genome sequence of Halobacterium species NRC-1.</title>
        <authorList>
            <person name="Ng W.V."/>
            <person name="Kennedy S.P."/>
            <person name="Mahairas G.G."/>
            <person name="Berquist B."/>
            <person name="Pan M."/>
            <person name="Shukla H.D."/>
            <person name="Lasky S.R."/>
            <person name="Baliga N.S."/>
            <person name="Thorsson V."/>
            <person name="Sbrogna J."/>
            <person name="Swartzell S."/>
            <person name="Weir D."/>
            <person name="Hall J."/>
            <person name="Dahl T.A."/>
            <person name="Welti R."/>
            <person name="Goo Y.A."/>
            <person name="Leithauser B."/>
            <person name="Keller K."/>
            <person name="Cruz R."/>
            <person name="Danson M.J."/>
            <person name="Hough D.W."/>
            <person name="Maddocks D.G."/>
            <person name="Jablonski P.E."/>
            <person name="Krebs M.P."/>
            <person name="Angevine C.M."/>
            <person name="Dale H."/>
            <person name="Isenbarger T.A."/>
            <person name="Peck R.F."/>
            <person name="Pohlschroder M."/>
            <person name="Spudich J.L."/>
            <person name="Jung K.-H."/>
            <person name="Alam M."/>
            <person name="Freitas T."/>
            <person name="Hou S."/>
            <person name="Daniels C.J."/>
            <person name="Dennis P.P."/>
            <person name="Omer A.D."/>
            <person name="Ebhardt H."/>
            <person name="Lowe T.M."/>
            <person name="Liang P."/>
            <person name="Riley M."/>
            <person name="Hood L."/>
            <person name="DasSarma S."/>
        </authorList>
    </citation>
    <scope>NUCLEOTIDE SEQUENCE [LARGE SCALE GENOMIC DNA]</scope>
    <source>
        <strain>ATCC 700922 / JCM 11081 / NRC-1</strain>
    </source>
</reference>
<comment type="similarity">
    <text evidence="2">Belongs to the UPF0213 family.</text>
</comment>
<evidence type="ECO:0000255" key="1">
    <source>
        <dbReference type="PROSITE-ProRule" id="PRU00977"/>
    </source>
</evidence>
<evidence type="ECO:0000305" key="2"/>
<gene>
    <name type="ordered locus">VNG_2274C</name>
</gene>
<protein>
    <recommendedName>
        <fullName>UPF0213 protein VNG_2274C</fullName>
    </recommendedName>
</protein>
<organism>
    <name type="scientific">Halobacterium salinarum (strain ATCC 700922 / JCM 11081 / NRC-1)</name>
    <name type="common">Halobacterium halobium</name>
    <dbReference type="NCBI Taxonomy" id="64091"/>
    <lineage>
        <taxon>Archaea</taxon>
        <taxon>Methanobacteriati</taxon>
        <taxon>Methanobacteriota</taxon>
        <taxon>Stenosarchaea group</taxon>
        <taxon>Halobacteria</taxon>
        <taxon>Halobacteriales</taxon>
        <taxon>Halobacteriaceae</taxon>
        <taxon>Halobacterium</taxon>
        <taxon>Halobacterium salinarum NRC-34001</taxon>
    </lineage>
</organism>
<keyword id="KW-1185">Reference proteome</keyword>
<sequence>MHHVYVIECSDGTYYTGYTTDVQRRVAEHNAGDGAKYTRGRTPVTLRHTESFDSKSEAMRREYRIKQLSRAQKEALF</sequence>
<accession>Q9HN31</accession>
<feature type="chain" id="PRO_0000161403" description="UPF0213 protein VNG_2274C">
    <location>
        <begin position="1"/>
        <end position="77"/>
    </location>
</feature>
<feature type="domain" description="GIY-YIG" evidence="1">
    <location>
        <begin position="1"/>
        <end position="75"/>
    </location>
</feature>
<proteinExistence type="inferred from homology"/>